<accession>P91778</accession>
<proteinExistence type="evidence at transcript level"/>
<comment type="catalytic activity">
    <reaction evidence="2">
        <text>Endohydrolysis of (1-&gt;4)-alpha-D-glucosidic linkages in polysaccharides containing three or more (1-&gt;4)-alpha-linked D-glucose units.</text>
        <dbReference type="EC" id="3.2.1.1"/>
    </reaction>
</comment>
<comment type="cofactor">
    <cofactor evidence="2">
        <name>Ca(2+)</name>
        <dbReference type="ChEBI" id="CHEBI:29108"/>
    </cofactor>
    <text evidence="2">Binds 1 Ca(2+) ion per subunit.</text>
</comment>
<comment type="cofactor">
    <cofactor evidence="2">
        <name>chloride</name>
        <dbReference type="ChEBI" id="CHEBI:17996"/>
    </cofactor>
    <text evidence="2">Binds 1 Cl(-) ion per subunit.</text>
</comment>
<comment type="subunit">
    <text evidence="1">Monomer.</text>
</comment>
<comment type="similarity">
    <text evidence="4">Belongs to the glycosyl hydrolase 13 family.</text>
</comment>
<keyword id="KW-0106">Calcium</keyword>
<keyword id="KW-0119">Carbohydrate metabolism</keyword>
<keyword id="KW-0868">Chloride</keyword>
<keyword id="KW-1015">Disulfide bond</keyword>
<keyword id="KW-0326">Glycosidase</keyword>
<keyword id="KW-0378">Hydrolase</keyword>
<keyword id="KW-0479">Metal-binding</keyword>
<keyword id="KW-0732">Signal</keyword>
<organism>
    <name type="scientific">Pecten maximus</name>
    <name type="common">King scallop</name>
    <name type="synonym">Pilgrim's clam</name>
    <dbReference type="NCBI Taxonomy" id="6579"/>
    <lineage>
        <taxon>Eukaryota</taxon>
        <taxon>Metazoa</taxon>
        <taxon>Spiralia</taxon>
        <taxon>Lophotrochozoa</taxon>
        <taxon>Mollusca</taxon>
        <taxon>Bivalvia</taxon>
        <taxon>Autobranchia</taxon>
        <taxon>Pteriomorphia</taxon>
        <taxon>Pectinida</taxon>
        <taxon>Pectinoidea</taxon>
        <taxon>Pectinidae</taxon>
        <taxon>Pecten</taxon>
    </lineage>
</organism>
<protein>
    <recommendedName>
        <fullName>Alpha-amylase</fullName>
        <ecNumber evidence="2">3.2.1.1</ecNumber>
    </recommendedName>
    <alternativeName>
        <fullName>1,4-alpha-D-glucan glucanohydrolase</fullName>
    </alternativeName>
</protein>
<dbReference type="EC" id="3.2.1.1" evidence="2"/>
<dbReference type="EMBL" id="X99729">
    <property type="protein sequence ID" value="CAA68065.1"/>
    <property type="molecule type" value="mRNA"/>
</dbReference>
<dbReference type="SMR" id="P91778"/>
<dbReference type="CAZy" id="GH13">
    <property type="family name" value="Glycoside Hydrolase Family 13"/>
</dbReference>
<dbReference type="OrthoDB" id="550577at2759"/>
<dbReference type="GO" id="GO:0004556">
    <property type="term" value="F:alpha-amylase activity"/>
    <property type="evidence" value="ECO:0007669"/>
    <property type="project" value="UniProtKB-EC"/>
</dbReference>
<dbReference type="GO" id="GO:0046872">
    <property type="term" value="F:metal ion binding"/>
    <property type="evidence" value="ECO:0007669"/>
    <property type="project" value="UniProtKB-KW"/>
</dbReference>
<dbReference type="GO" id="GO:0005975">
    <property type="term" value="P:carbohydrate metabolic process"/>
    <property type="evidence" value="ECO:0007669"/>
    <property type="project" value="InterPro"/>
</dbReference>
<dbReference type="CDD" id="cd11317">
    <property type="entry name" value="AmyAc_bac_euk_AmyA"/>
    <property type="match status" value="1"/>
</dbReference>
<dbReference type="FunFam" id="2.60.40.1180:FF:000020">
    <property type="entry name" value="Pancreatic alpha-amylase"/>
    <property type="match status" value="1"/>
</dbReference>
<dbReference type="Gene3D" id="3.20.20.80">
    <property type="entry name" value="Glycosidases"/>
    <property type="match status" value="1"/>
</dbReference>
<dbReference type="Gene3D" id="2.60.40.1180">
    <property type="entry name" value="Golgi alpha-mannosidase II"/>
    <property type="match status" value="1"/>
</dbReference>
<dbReference type="InterPro" id="IPR006048">
    <property type="entry name" value="A-amylase/branching_C"/>
</dbReference>
<dbReference type="InterPro" id="IPR031319">
    <property type="entry name" value="A-amylase_C"/>
</dbReference>
<dbReference type="InterPro" id="IPR006046">
    <property type="entry name" value="Alpha_amylase"/>
</dbReference>
<dbReference type="InterPro" id="IPR006047">
    <property type="entry name" value="Glyco_hydro_13_cat_dom"/>
</dbReference>
<dbReference type="InterPro" id="IPR013780">
    <property type="entry name" value="Glyco_hydro_b"/>
</dbReference>
<dbReference type="InterPro" id="IPR017853">
    <property type="entry name" value="Glycoside_hydrolase_SF"/>
</dbReference>
<dbReference type="PANTHER" id="PTHR43447">
    <property type="entry name" value="ALPHA-AMYLASE"/>
    <property type="match status" value="1"/>
</dbReference>
<dbReference type="Pfam" id="PF00128">
    <property type="entry name" value="Alpha-amylase"/>
    <property type="match status" value="1"/>
</dbReference>
<dbReference type="Pfam" id="PF02806">
    <property type="entry name" value="Alpha-amylase_C"/>
    <property type="match status" value="1"/>
</dbReference>
<dbReference type="PRINTS" id="PR00110">
    <property type="entry name" value="ALPHAAMYLASE"/>
</dbReference>
<dbReference type="SMART" id="SM00642">
    <property type="entry name" value="Aamy"/>
    <property type="match status" value="1"/>
</dbReference>
<dbReference type="SMART" id="SM00632">
    <property type="entry name" value="Aamy_C"/>
    <property type="match status" value="1"/>
</dbReference>
<dbReference type="SUPFAM" id="SSF51445">
    <property type="entry name" value="(Trans)glycosidases"/>
    <property type="match status" value="1"/>
</dbReference>
<dbReference type="SUPFAM" id="SSF51011">
    <property type="entry name" value="Glycosyl hydrolase domain"/>
    <property type="match status" value="1"/>
</dbReference>
<feature type="signal peptide" evidence="3">
    <location>
        <begin position="1"/>
        <end position="19"/>
    </location>
</feature>
<feature type="chain" id="PRO_0000001396" description="Alpha-amylase">
    <location>
        <begin position="20"/>
        <end position="508"/>
    </location>
</feature>
<feature type="active site" description="Nucleophile" evidence="2">
    <location>
        <position position="212"/>
    </location>
</feature>
<feature type="active site" description="Proton donor" evidence="2">
    <location>
        <position position="248"/>
    </location>
</feature>
<feature type="binding site" evidence="2">
    <location>
        <position position="116"/>
    </location>
    <ligand>
        <name>Ca(2+)</name>
        <dbReference type="ChEBI" id="CHEBI:29108"/>
    </ligand>
</feature>
<feature type="binding site" evidence="2">
    <location>
        <position position="173"/>
    </location>
    <ligand>
        <name>Ca(2+)</name>
        <dbReference type="ChEBI" id="CHEBI:29108"/>
    </ligand>
</feature>
<feature type="binding site" evidence="2">
    <location>
        <position position="182"/>
    </location>
    <ligand>
        <name>Ca(2+)</name>
        <dbReference type="ChEBI" id="CHEBI:29108"/>
    </ligand>
</feature>
<feature type="binding site" evidence="2">
    <location>
        <position position="210"/>
    </location>
    <ligand>
        <name>chloride</name>
        <dbReference type="ChEBI" id="CHEBI:17996"/>
    </ligand>
</feature>
<feature type="binding site" evidence="2">
    <location>
        <position position="216"/>
    </location>
    <ligand>
        <name>Ca(2+)</name>
        <dbReference type="ChEBI" id="CHEBI:29108"/>
    </ligand>
</feature>
<feature type="binding site" evidence="2">
    <location>
        <position position="311"/>
    </location>
    <ligand>
        <name>chloride</name>
        <dbReference type="ChEBI" id="CHEBI:17996"/>
    </ligand>
</feature>
<feature type="binding site" evidence="2">
    <location>
        <position position="349"/>
    </location>
    <ligand>
        <name>chloride</name>
        <dbReference type="ChEBI" id="CHEBI:17996"/>
    </ligand>
</feature>
<feature type="site" description="Transition state stabilizer" evidence="2">
    <location>
        <position position="313"/>
    </location>
</feature>
<feature type="disulfide bond" evidence="2">
    <location>
        <begin position="46"/>
        <end position="102"/>
    </location>
</feature>
<feature type="disulfide bond" evidence="2">
    <location>
        <begin position="156"/>
        <end position="175"/>
    </location>
</feature>
<feature type="disulfide bond" evidence="2">
    <location>
        <begin position="383"/>
        <end position="389"/>
    </location>
</feature>
<feature type="disulfide bond" evidence="2">
    <location>
        <begin position="455"/>
        <end position="467"/>
    </location>
</feature>
<sequence length="508" mass="56354">MLSLIIAACCVTVALAGTFSNPTCAPGRNTIVHLFEWKWTDIAKECERFLGPNGFCGVQISPPNENRLVNNRPWWERYQPVSYKLQTRSGSEDQLRDMISRCNRVNVRIYSDTVINHMTGVGGSGTGTAGSHWNGDTLSYPGVPFSAWDFNTGNECHSSDMNIHDYNNAEEIRNCRLVSLADLKLSKNYVREEITQYMNHLIDLGVAGFRIDAAKHMWPGDLRAMFGTLHDLNSAVFGSGRKPFIFQEVIDMGGEPISASEYTGIGRVTNFIFGVKLGQVFRNENKASNLHNWGEAWGMPNSNDVVVFIDNHDNQRGHGGGGGPLTHFEPRPYKLATAFMLAHPYGFTRLMSSYNFDRSNTDQGPPHNGDNINDVTINADLTCGNGWTCEHRWREIYNMVAFRNIVMGQNLQHWWDNGNYQIAFGRGNKGFIAMNMDNHNLDQTLQTGLPAGTYCDVISGSYDGSSCSGTEIQVGNDGNAHFSISNSSDDPMIAIHVGAKKGQPKVTT</sequence>
<reference key="1">
    <citation type="journal article" date="1997" name="Mol. Mar. Biol. Biotechnol.">
        <title>Amylase on Pecten maximus (Mollusca, bivalves): protein and cDNA characterization; quantification of the expression in the digestive gland.</title>
        <authorList>
            <person name="Le Moine S."/>
            <person name="Sellos D."/>
            <person name="Moal J."/>
            <person name="Daniel J.Y."/>
            <person name="San Juan Serrano F."/>
            <person name="Samain J.F."/>
            <person name="Van Wormhoudt A."/>
        </authorList>
    </citation>
    <scope>NUCLEOTIDE SEQUENCE [MRNA]</scope>
    <source>
        <tissue>Digestive gland</tissue>
    </source>
</reference>
<evidence type="ECO:0000250" key="1"/>
<evidence type="ECO:0000250" key="2">
    <source>
        <dbReference type="UniProtKB" id="P04746"/>
    </source>
</evidence>
<evidence type="ECO:0000255" key="3"/>
<evidence type="ECO:0000305" key="4"/>
<name>AMY_PECMA</name>